<accession>Q81ZG8</accession>
<accession>Q6I4B5</accession>
<accession>Q6KY17</accession>
<keyword id="KW-0378">Hydrolase</keyword>
<keyword id="KW-0511">Multifunctional enzyme</keyword>
<keyword id="KW-0658">Purine biosynthesis</keyword>
<keyword id="KW-1185">Reference proteome</keyword>
<keyword id="KW-0808">Transferase</keyword>
<evidence type="ECO:0000255" key="1">
    <source>
        <dbReference type="HAMAP-Rule" id="MF_00139"/>
    </source>
</evidence>
<evidence type="ECO:0000255" key="2">
    <source>
        <dbReference type="PROSITE-ProRule" id="PRU01202"/>
    </source>
</evidence>
<comment type="catalytic activity">
    <reaction evidence="1">
        <text>(6R)-10-formyltetrahydrofolate + 5-amino-1-(5-phospho-beta-D-ribosyl)imidazole-4-carboxamide = 5-formamido-1-(5-phospho-D-ribosyl)imidazole-4-carboxamide + (6S)-5,6,7,8-tetrahydrofolate</text>
        <dbReference type="Rhea" id="RHEA:22192"/>
        <dbReference type="ChEBI" id="CHEBI:57453"/>
        <dbReference type="ChEBI" id="CHEBI:58467"/>
        <dbReference type="ChEBI" id="CHEBI:58475"/>
        <dbReference type="ChEBI" id="CHEBI:195366"/>
        <dbReference type="EC" id="2.1.2.3"/>
    </reaction>
</comment>
<comment type="catalytic activity">
    <reaction evidence="1">
        <text>IMP + H2O = 5-formamido-1-(5-phospho-D-ribosyl)imidazole-4-carboxamide</text>
        <dbReference type="Rhea" id="RHEA:18445"/>
        <dbReference type="ChEBI" id="CHEBI:15377"/>
        <dbReference type="ChEBI" id="CHEBI:58053"/>
        <dbReference type="ChEBI" id="CHEBI:58467"/>
        <dbReference type="EC" id="3.5.4.10"/>
    </reaction>
</comment>
<comment type="pathway">
    <text evidence="1">Purine metabolism; IMP biosynthesis via de novo pathway; 5-formamido-1-(5-phospho-D-ribosyl)imidazole-4-carboxamide from 5-amino-1-(5-phospho-D-ribosyl)imidazole-4-carboxamide (10-formyl THF route): step 1/1.</text>
</comment>
<comment type="pathway">
    <text evidence="1">Purine metabolism; IMP biosynthesis via de novo pathway; IMP from 5-formamido-1-(5-phospho-D-ribosyl)imidazole-4-carboxamide: step 1/1.</text>
</comment>
<comment type="domain">
    <text evidence="1">The IMP cyclohydrolase activity resides in the N-terminal region.</text>
</comment>
<comment type="similarity">
    <text evidence="1">Belongs to the PurH family.</text>
</comment>
<reference key="1">
    <citation type="journal article" date="2003" name="Nature">
        <title>The genome sequence of Bacillus anthracis Ames and comparison to closely related bacteria.</title>
        <authorList>
            <person name="Read T.D."/>
            <person name="Peterson S.N."/>
            <person name="Tourasse N.J."/>
            <person name="Baillie L.W."/>
            <person name="Paulsen I.T."/>
            <person name="Nelson K.E."/>
            <person name="Tettelin H."/>
            <person name="Fouts D.E."/>
            <person name="Eisen J.A."/>
            <person name="Gill S.R."/>
            <person name="Holtzapple E.K."/>
            <person name="Okstad O.A."/>
            <person name="Helgason E."/>
            <person name="Rilstone J."/>
            <person name="Wu M."/>
            <person name="Kolonay J.F."/>
            <person name="Beanan M.J."/>
            <person name="Dodson R.J."/>
            <person name="Brinkac L.M."/>
            <person name="Gwinn M.L."/>
            <person name="DeBoy R.T."/>
            <person name="Madpu R."/>
            <person name="Daugherty S.C."/>
            <person name="Durkin A.S."/>
            <person name="Haft D.H."/>
            <person name="Nelson W.C."/>
            <person name="Peterson J.D."/>
            <person name="Pop M."/>
            <person name="Khouri H.M."/>
            <person name="Radune D."/>
            <person name="Benton J.L."/>
            <person name="Mahamoud Y."/>
            <person name="Jiang L."/>
            <person name="Hance I.R."/>
            <person name="Weidman J.F."/>
            <person name="Berry K.J."/>
            <person name="Plaut R.D."/>
            <person name="Wolf A.M."/>
            <person name="Watkins K.L."/>
            <person name="Nierman W.C."/>
            <person name="Hazen A."/>
            <person name="Cline R.T."/>
            <person name="Redmond C."/>
            <person name="Thwaite J.E."/>
            <person name="White O."/>
            <person name="Salzberg S.L."/>
            <person name="Thomason B."/>
            <person name="Friedlander A.M."/>
            <person name="Koehler T.M."/>
            <person name="Hanna P.C."/>
            <person name="Kolstoe A.-B."/>
            <person name="Fraser C.M."/>
        </authorList>
    </citation>
    <scope>NUCLEOTIDE SEQUENCE [LARGE SCALE GENOMIC DNA]</scope>
    <source>
        <strain>Ames / isolate Porton</strain>
    </source>
</reference>
<reference key="2">
    <citation type="submission" date="2004-01" db="EMBL/GenBank/DDBJ databases">
        <title>Complete genome sequence of Bacillus anthracis Sterne.</title>
        <authorList>
            <person name="Brettin T.S."/>
            <person name="Bruce D."/>
            <person name="Challacombe J.F."/>
            <person name="Gilna P."/>
            <person name="Han C."/>
            <person name="Hill K."/>
            <person name="Hitchcock P."/>
            <person name="Jackson P."/>
            <person name="Keim P."/>
            <person name="Longmire J."/>
            <person name="Lucas S."/>
            <person name="Okinaka R."/>
            <person name="Richardson P."/>
            <person name="Rubin E."/>
            <person name="Tice H."/>
        </authorList>
    </citation>
    <scope>NUCLEOTIDE SEQUENCE [LARGE SCALE GENOMIC DNA]</scope>
    <source>
        <strain>Sterne</strain>
    </source>
</reference>
<reference key="3">
    <citation type="journal article" date="2009" name="J. Bacteriol.">
        <title>The complete genome sequence of Bacillus anthracis Ames 'Ancestor'.</title>
        <authorList>
            <person name="Ravel J."/>
            <person name="Jiang L."/>
            <person name="Stanley S.T."/>
            <person name="Wilson M.R."/>
            <person name="Decker R.S."/>
            <person name="Read T.D."/>
            <person name="Worsham P."/>
            <person name="Keim P.S."/>
            <person name="Salzberg S.L."/>
            <person name="Fraser-Liggett C.M."/>
            <person name="Rasko D.A."/>
        </authorList>
    </citation>
    <scope>NUCLEOTIDE SEQUENCE [LARGE SCALE GENOMIC DNA]</scope>
    <source>
        <strain>Ames ancestor</strain>
    </source>
</reference>
<dbReference type="EC" id="2.1.2.3" evidence="1"/>
<dbReference type="EC" id="3.5.4.10" evidence="1"/>
<dbReference type="EMBL" id="AE016879">
    <property type="protein sequence ID" value="AAP24334.1"/>
    <property type="molecule type" value="Genomic_DNA"/>
</dbReference>
<dbReference type="EMBL" id="AE017334">
    <property type="protein sequence ID" value="AAT29385.1"/>
    <property type="molecule type" value="Genomic_DNA"/>
</dbReference>
<dbReference type="EMBL" id="AE017225">
    <property type="protein sequence ID" value="AAT52616.1"/>
    <property type="molecule type" value="Genomic_DNA"/>
</dbReference>
<dbReference type="RefSeq" id="NP_842848.1">
    <property type="nucleotide sequence ID" value="NC_003997.3"/>
</dbReference>
<dbReference type="RefSeq" id="WP_000745427.1">
    <property type="nucleotide sequence ID" value="NZ_WXXJ01000007.1"/>
</dbReference>
<dbReference type="RefSeq" id="YP_026565.1">
    <property type="nucleotide sequence ID" value="NC_005945.1"/>
</dbReference>
<dbReference type="SMR" id="Q81ZG8"/>
<dbReference type="STRING" id="261594.GBAA_0298"/>
<dbReference type="DNASU" id="1085697"/>
<dbReference type="GeneID" id="45020357"/>
<dbReference type="KEGG" id="ban:BA_0298"/>
<dbReference type="KEGG" id="banh:HYU01_01630"/>
<dbReference type="KEGG" id="bar:GBAA_0298"/>
<dbReference type="KEGG" id="bat:BAS0285"/>
<dbReference type="PATRIC" id="fig|198094.11.peg.289"/>
<dbReference type="eggNOG" id="COG0138">
    <property type="taxonomic scope" value="Bacteria"/>
</dbReference>
<dbReference type="HOGENOM" id="CLU_016316_5_2_9"/>
<dbReference type="OMA" id="IKHNNPC"/>
<dbReference type="OrthoDB" id="9802065at2"/>
<dbReference type="UniPathway" id="UPA00074">
    <property type="reaction ID" value="UER00133"/>
</dbReference>
<dbReference type="UniPathway" id="UPA00074">
    <property type="reaction ID" value="UER00135"/>
</dbReference>
<dbReference type="Proteomes" id="UP000000427">
    <property type="component" value="Chromosome"/>
</dbReference>
<dbReference type="Proteomes" id="UP000000594">
    <property type="component" value="Chromosome"/>
</dbReference>
<dbReference type="GO" id="GO:0005829">
    <property type="term" value="C:cytosol"/>
    <property type="evidence" value="ECO:0007669"/>
    <property type="project" value="TreeGrafter"/>
</dbReference>
<dbReference type="GO" id="GO:0003937">
    <property type="term" value="F:IMP cyclohydrolase activity"/>
    <property type="evidence" value="ECO:0007669"/>
    <property type="project" value="UniProtKB-UniRule"/>
</dbReference>
<dbReference type="GO" id="GO:0004643">
    <property type="term" value="F:phosphoribosylaminoimidazolecarboxamide formyltransferase activity"/>
    <property type="evidence" value="ECO:0007669"/>
    <property type="project" value="UniProtKB-UniRule"/>
</dbReference>
<dbReference type="GO" id="GO:0006189">
    <property type="term" value="P:'de novo' IMP biosynthetic process"/>
    <property type="evidence" value="ECO:0007669"/>
    <property type="project" value="UniProtKB-UniRule"/>
</dbReference>
<dbReference type="CDD" id="cd01421">
    <property type="entry name" value="IMPCH"/>
    <property type="match status" value="1"/>
</dbReference>
<dbReference type="FunFam" id="3.40.140.20:FF:000001">
    <property type="entry name" value="Bifunctional purine biosynthesis protein PurH"/>
    <property type="match status" value="1"/>
</dbReference>
<dbReference type="FunFam" id="3.40.140.20:FF:000002">
    <property type="entry name" value="Bifunctional purine biosynthesis protein PurH"/>
    <property type="match status" value="1"/>
</dbReference>
<dbReference type="FunFam" id="3.40.50.1380:FF:000001">
    <property type="entry name" value="Bifunctional purine biosynthesis protein PurH"/>
    <property type="match status" value="1"/>
</dbReference>
<dbReference type="Gene3D" id="3.40.140.20">
    <property type="match status" value="2"/>
</dbReference>
<dbReference type="Gene3D" id="3.40.50.1380">
    <property type="entry name" value="Methylglyoxal synthase-like domain"/>
    <property type="match status" value="1"/>
</dbReference>
<dbReference type="HAMAP" id="MF_00139">
    <property type="entry name" value="PurH"/>
    <property type="match status" value="1"/>
</dbReference>
<dbReference type="InterPro" id="IPR024051">
    <property type="entry name" value="AICAR_Tfase_dup_dom_sf"/>
</dbReference>
<dbReference type="InterPro" id="IPR016193">
    <property type="entry name" value="Cytidine_deaminase-like"/>
</dbReference>
<dbReference type="InterPro" id="IPR011607">
    <property type="entry name" value="MGS-like_dom"/>
</dbReference>
<dbReference type="InterPro" id="IPR036914">
    <property type="entry name" value="MGS-like_dom_sf"/>
</dbReference>
<dbReference type="InterPro" id="IPR002695">
    <property type="entry name" value="PurH-like"/>
</dbReference>
<dbReference type="NCBIfam" id="NF002049">
    <property type="entry name" value="PRK00881.1"/>
    <property type="match status" value="1"/>
</dbReference>
<dbReference type="NCBIfam" id="TIGR00355">
    <property type="entry name" value="purH"/>
    <property type="match status" value="1"/>
</dbReference>
<dbReference type="PANTHER" id="PTHR11692:SF0">
    <property type="entry name" value="BIFUNCTIONAL PURINE BIOSYNTHESIS PROTEIN ATIC"/>
    <property type="match status" value="1"/>
</dbReference>
<dbReference type="PANTHER" id="PTHR11692">
    <property type="entry name" value="BIFUNCTIONAL PURINE BIOSYNTHESIS PROTEIN PURH"/>
    <property type="match status" value="1"/>
</dbReference>
<dbReference type="Pfam" id="PF01808">
    <property type="entry name" value="AICARFT_IMPCHas"/>
    <property type="match status" value="1"/>
</dbReference>
<dbReference type="Pfam" id="PF02142">
    <property type="entry name" value="MGS"/>
    <property type="match status" value="1"/>
</dbReference>
<dbReference type="PIRSF" id="PIRSF000414">
    <property type="entry name" value="AICARFT_IMPCHas"/>
    <property type="match status" value="1"/>
</dbReference>
<dbReference type="SMART" id="SM00798">
    <property type="entry name" value="AICARFT_IMPCHas"/>
    <property type="match status" value="1"/>
</dbReference>
<dbReference type="SMART" id="SM00851">
    <property type="entry name" value="MGS"/>
    <property type="match status" value="1"/>
</dbReference>
<dbReference type="SUPFAM" id="SSF53927">
    <property type="entry name" value="Cytidine deaminase-like"/>
    <property type="match status" value="1"/>
</dbReference>
<dbReference type="SUPFAM" id="SSF52335">
    <property type="entry name" value="Methylglyoxal synthase-like"/>
    <property type="match status" value="1"/>
</dbReference>
<dbReference type="PROSITE" id="PS51855">
    <property type="entry name" value="MGS"/>
    <property type="match status" value="1"/>
</dbReference>
<feature type="chain" id="PRO_1000018838" description="Bifunctional purine biosynthesis protein PurH">
    <location>
        <begin position="1"/>
        <end position="511"/>
    </location>
</feature>
<feature type="domain" description="MGS-like" evidence="2">
    <location>
        <begin position="1"/>
        <end position="145"/>
    </location>
</feature>
<gene>
    <name evidence="1" type="primary">purH</name>
    <name type="ordered locus">BA_0298</name>
    <name type="ordered locus">GBAA_0298</name>
    <name type="ordered locus">BAS0285</name>
</gene>
<proteinExistence type="inferred from homology"/>
<name>PUR9_BACAN</name>
<protein>
    <recommendedName>
        <fullName evidence="1">Bifunctional purine biosynthesis protein PurH</fullName>
    </recommendedName>
    <domain>
        <recommendedName>
            <fullName evidence="1">Phosphoribosylaminoimidazolecarboxamide formyltransferase</fullName>
            <ecNumber evidence="1">2.1.2.3</ecNumber>
        </recommendedName>
        <alternativeName>
            <fullName evidence="1">AICAR transformylase</fullName>
        </alternativeName>
    </domain>
    <domain>
        <recommendedName>
            <fullName evidence="1">IMP cyclohydrolase</fullName>
            <ecNumber evidence="1">3.5.4.10</ecNumber>
        </recommendedName>
        <alternativeName>
            <fullName evidence="1">ATIC</fullName>
        </alternativeName>
        <alternativeName>
            <fullName evidence="1">IMP synthase</fullName>
        </alternativeName>
        <alternativeName>
            <fullName evidence="1">Inosinicase</fullName>
        </alternativeName>
    </domain>
</protein>
<organism>
    <name type="scientific">Bacillus anthracis</name>
    <dbReference type="NCBI Taxonomy" id="1392"/>
    <lineage>
        <taxon>Bacteria</taxon>
        <taxon>Bacillati</taxon>
        <taxon>Bacillota</taxon>
        <taxon>Bacilli</taxon>
        <taxon>Bacillales</taxon>
        <taxon>Bacillaceae</taxon>
        <taxon>Bacillus</taxon>
        <taxon>Bacillus cereus group</taxon>
    </lineage>
</organism>
<sequence>MKKRALVSVSDKTGVVEFVKGLLEQGIEVISTGGTKKLLEENGLQVIGISEVTGFPEIMDGRVKTLHPNIHGGLLAVRDNETHVAQMNELGMEPIDFVVVNLYPFKETIAKPDVTFADAIENIDIGGPTMIRSAAKNHKFVSVIVDPVDYDVVLAELKENGEVAEETKRKLAAKVFRHTAAYDALISNYLTEQMGEESPETLTVTFEKKQDLRYGENPHQKATFYKAPFAATSSVAYAEQLHGKELSYNNINDADAALSIVKEFTEPAVVAVKHMNPCGVGVGTDIHEAYTRAYEADPVSIFGGIIAANREIDKATAEKLHEIFLEIIIAPSFSKEALEVLQSKKNLRLLTVNIEKATSASKKLTSVQGGLLVQEEDTLSLDESTISIPTKREPSEQEWKDLKLAWKVVKHVKSNAIVLAKDDMTIGVGAGQMNRVGSAKIAITQAGEKAQGSALASDAFFPMPDTVEEAAKAGITAIIQPGGSIRDEDSIKVADTYGIAMVFTGVRHFKH</sequence>